<reference key="1">
    <citation type="journal article" date="2004" name="Proc. Natl. Acad. Sci. U.S.A.">
        <title>Genome sequence of the enterobacterial phytopathogen Erwinia carotovora subsp. atroseptica and characterization of virulence factors.</title>
        <authorList>
            <person name="Bell K.S."/>
            <person name="Sebaihia M."/>
            <person name="Pritchard L."/>
            <person name="Holden M.T.G."/>
            <person name="Hyman L.J."/>
            <person name="Holeva M.C."/>
            <person name="Thomson N.R."/>
            <person name="Bentley S.D."/>
            <person name="Churcher L.J.C."/>
            <person name="Mungall K."/>
            <person name="Atkin R."/>
            <person name="Bason N."/>
            <person name="Brooks K."/>
            <person name="Chillingworth T."/>
            <person name="Clark K."/>
            <person name="Doggett J."/>
            <person name="Fraser A."/>
            <person name="Hance Z."/>
            <person name="Hauser H."/>
            <person name="Jagels K."/>
            <person name="Moule S."/>
            <person name="Norbertczak H."/>
            <person name="Ormond D."/>
            <person name="Price C."/>
            <person name="Quail M.A."/>
            <person name="Sanders M."/>
            <person name="Walker D."/>
            <person name="Whitehead S."/>
            <person name="Salmond G.P.C."/>
            <person name="Birch P.R.J."/>
            <person name="Parkhill J."/>
            <person name="Toth I.K."/>
        </authorList>
    </citation>
    <scope>NUCLEOTIDE SEQUENCE [LARGE SCALE GENOMIC DNA]</scope>
    <source>
        <strain>SCRI 1043 / ATCC BAA-672</strain>
    </source>
</reference>
<gene>
    <name evidence="1" type="primary">orn</name>
    <name type="ordered locus">ECA3964</name>
</gene>
<dbReference type="EC" id="3.1.15.-" evidence="1"/>
<dbReference type="EMBL" id="BX950851">
    <property type="protein sequence ID" value="CAG76861.1"/>
    <property type="molecule type" value="Genomic_DNA"/>
</dbReference>
<dbReference type="RefSeq" id="WP_011095458.1">
    <property type="nucleotide sequence ID" value="NC_004547.2"/>
</dbReference>
<dbReference type="SMR" id="Q6D037"/>
<dbReference type="STRING" id="218491.ECA3964"/>
<dbReference type="KEGG" id="eca:ECA3964"/>
<dbReference type="PATRIC" id="fig|218491.5.peg.4027"/>
<dbReference type="eggNOG" id="COG1949">
    <property type="taxonomic scope" value="Bacteria"/>
</dbReference>
<dbReference type="HOGENOM" id="CLU_064761_2_0_6"/>
<dbReference type="OrthoDB" id="9801329at2"/>
<dbReference type="Proteomes" id="UP000007966">
    <property type="component" value="Chromosome"/>
</dbReference>
<dbReference type="GO" id="GO:0005737">
    <property type="term" value="C:cytoplasm"/>
    <property type="evidence" value="ECO:0007669"/>
    <property type="project" value="UniProtKB-SubCell"/>
</dbReference>
<dbReference type="GO" id="GO:0000175">
    <property type="term" value="F:3'-5'-RNA exonuclease activity"/>
    <property type="evidence" value="ECO:0007669"/>
    <property type="project" value="InterPro"/>
</dbReference>
<dbReference type="GO" id="GO:0003676">
    <property type="term" value="F:nucleic acid binding"/>
    <property type="evidence" value="ECO:0007669"/>
    <property type="project" value="InterPro"/>
</dbReference>
<dbReference type="GO" id="GO:0006259">
    <property type="term" value="P:DNA metabolic process"/>
    <property type="evidence" value="ECO:0007669"/>
    <property type="project" value="UniProtKB-ARBA"/>
</dbReference>
<dbReference type="CDD" id="cd06135">
    <property type="entry name" value="Orn"/>
    <property type="match status" value="1"/>
</dbReference>
<dbReference type="FunFam" id="3.30.420.10:FF:000003">
    <property type="entry name" value="Oligoribonuclease"/>
    <property type="match status" value="1"/>
</dbReference>
<dbReference type="Gene3D" id="3.30.420.10">
    <property type="entry name" value="Ribonuclease H-like superfamily/Ribonuclease H"/>
    <property type="match status" value="1"/>
</dbReference>
<dbReference type="HAMAP" id="MF_00045">
    <property type="entry name" value="Oligoribonuclease"/>
    <property type="match status" value="1"/>
</dbReference>
<dbReference type="InterPro" id="IPR013520">
    <property type="entry name" value="Exonuclease_RNaseT/DNA_pol3"/>
</dbReference>
<dbReference type="InterPro" id="IPR022894">
    <property type="entry name" value="Oligoribonuclease"/>
</dbReference>
<dbReference type="InterPro" id="IPR012337">
    <property type="entry name" value="RNaseH-like_sf"/>
</dbReference>
<dbReference type="InterPro" id="IPR036397">
    <property type="entry name" value="RNaseH_sf"/>
</dbReference>
<dbReference type="NCBIfam" id="NF003765">
    <property type="entry name" value="PRK05359.1"/>
    <property type="match status" value="1"/>
</dbReference>
<dbReference type="PANTHER" id="PTHR11046">
    <property type="entry name" value="OLIGORIBONUCLEASE, MITOCHONDRIAL"/>
    <property type="match status" value="1"/>
</dbReference>
<dbReference type="PANTHER" id="PTHR11046:SF0">
    <property type="entry name" value="OLIGORIBONUCLEASE, MITOCHONDRIAL"/>
    <property type="match status" value="1"/>
</dbReference>
<dbReference type="Pfam" id="PF00929">
    <property type="entry name" value="RNase_T"/>
    <property type="match status" value="1"/>
</dbReference>
<dbReference type="SMART" id="SM00479">
    <property type="entry name" value="EXOIII"/>
    <property type="match status" value="1"/>
</dbReference>
<dbReference type="SUPFAM" id="SSF53098">
    <property type="entry name" value="Ribonuclease H-like"/>
    <property type="match status" value="1"/>
</dbReference>
<organism>
    <name type="scientific">Pectobacterium atrosepticum (strain SCRI 1043 / ATCC BAA-672)</name>
    <name type="common">Erwinia carotovora subsp. atroseptica</name>
    <dbReference type="NCBI Taxonomy" id="218491"/>
    <lineage>
        <taxon>Bacteria</taxon>
        <taxon>Pseudomonadati</taxon>
        <taxon>Pseudomonadota</taxon>
        <taxon>Gammaproteobacteria</taxon>
        <taxon>Enterobacterales</taxon>
        <taxon>Pectobacteriaceae</taxon>
        <taxon>Pectobacterium</taxon>
    </lineage>
</organism>
<accession>Q6D037</accession>
<sequence>MVDENNLIWIDLEMTGLNPDHDRIIEIATLVTDANLNVLAEGPVLAVHQSDSQLALMDDWNVRTHGASGLTDRVKVSTADERAAELETLAFLQKWVPAGKSPICGNSIGQDRRFLFRYMPELEAYFHYRYLDVSTLKELARRWKPEIMAGFKKQGTHQAMDDIRESLAELVYYRENFLRL</sequence>
<proteinExistence type="inferred from homology"/>
<feature type="chain" id="PRO_0000111036" description="Oligoribonuclease">
    <location>
        <begin position="1"/>
        <end position="180"/>
    </location>
</feature>
<feature type="domain" description="Exonuclease" evidence="1">
    <location>
        <begin position="7"/>
        <end position="170"/>
    </location>
</feature>
<feature type="active site" evidence="1">
    <location>
        <position position="128"/>
    </location>
</feature>
<comment type="function">
    <text evidence="1">3'-to-5' exoribonuclease specific for small oligoribonucleotides.</text>
</comment>
<comment type="subcellular location">
    <subcellularLocation>
        <location evidence="1">Cytoplasm</location>
    </subcellularLocation>
</comment>
<comment type="similarity">
    <text evidence="1">Belongs to the oligoribonuclease family.</text>
</comment>
<protein>
    <recommendedName>
        <fullName evidence="1">Oligoribonuclease</fullName>
        <ecNumber evidence="1">3.1.15.-</ecNumber>
    </recommendedName>
</protein>
<keyword id="KW-0963">Cytoplasm</keyword>
<keyword id="KW-0269">Exonuclease</keyword>
<keyword id="KW-0378">Hydrolase</keyword>
<keyword id="KW-0540">Nuclease</keyword>
<keyword id="KW-1185">Reference proteome</keyword>
<name>ORN_PECAS</name>
<evidence type="ECO:0000255" key="1">
    <source>
        <dbReference type="HAMAP-Rule" id="MF_00045"/>
    </source>
</evidence>